<name>LPXB_ANADE</name>
<organism>
    <name type="scientific">Anaeromyxobacter dehalogenans (strain 2CP-C)</name>
    <dbReference type="NCBI Taxonomy" id="290397"/>
    <lineage>
        <taxon>Bacteria</taxon>
        <taxon>Pseudomonadati</taxon>
        <taxon>Myxococcota</taxon>
        <taxon>Myxococcia</taxon>
        <taxon>Myxococcales</taxon>
        <taxon>Cystobacterineae</taxon>
        <taxon>Anaeromyxobacteraceae</taxon>
        <taxon>Anaeromyxobacter</taxon>
    </lineage>
</organism>
<feature type="chain" id="PRO_0000255159" description="Lipid-A-disaccharide synthase">
    <location>
        <begin position="1"/>
        <end position="383"/>
    </location>
</feature>
<reference key="1">
    <citation type="submission" date="2006-01" db="EMBL/GenBank/DDBJ databases">
        <title>Complete sequence of Anaeromyxobacter dehalogenans 2CP-C.</title>
        <authorList>
            <person name="Copeland A."/>
            <person name="Lucas S."/>
            <person name="Lapidus A."/>
            <person name="Barry K."/>
            <person name="Detter J.C."/>
            <person name="Glavina T."/>
            <person name="Hammon N."/>
            <person name="Israni S."/>
            <person name="Pitluck S."/>
            <person name="Brettin T."/>
            <person name="Bruce D."/>
            <person name="Han C."/>
            <person name="Tapia R."/>
            <person name="Gilna P."/>
            <person name="Kiss H."/>
            <person name="Schmutz J."/>
            <person name="Larimer F."/>
            <person name="Land M."/>
            <person name="Kyrpides N."/>
            <person name="Anderson I."/>
            <person name="Sanford R.A."/>
            <person name="Ritalahti K.M."/>
            <person name="Thomas H.S."/>
            <person name="Kirby J.R."/>
            <person name="Zhulin I.B."/>
            <person name="Loeffler F.E."/>
            <person name="Richardson P."/>
        </authorList>
    </citation>
    <scope>NUCLEOTIDE SEQUENCE [LARGE SCALE GENOMIC DNA]</scope>
    <source>
        <strain>2CP-C</strain>
    </source>
</reference>
<protein>
    <recommendedName>
        <fullName evidence="1">Lipid-A-disaccharide synthase</fullName>
        <ecNumber evidence="1">2.4.1.182</ecNumber>
    </recommendedName>
</protein>
<gene>
    <name evidence="1" type="primary">lpxB</name>
    <name type="ordered locus">Adeh_2625</name>
</gene>
<accession>Q2IL69</accession>
<sequence length="383" mass="41665">MLYSPRLTDQILIVAGEASADLHAARTLHELQRLRPGLTAFGVGGPRLREAGLEALAPAEDISVMGLAEVLPRIPRILGILRMLGRAAAERRPKAALLVDLPDFNLRLAARLKKLGIPVVYYVSPTIWAWRQGRAKQIARVVDRMLCILPFEERFYEGTGVSARFVGHPFAERPPPGTPESYRSALGLPAARTTIAMVPGSRPSELKRLLPPMLEAAERLRAAHPDAQFVVPVAPTLDRAALEPYLAAHRTLEVRLVDGRTEEVVGASDAALVKSGTSTLEAGLMLRPMVVVYKLSWLSYAVARMLVKIAHVALVNILAGRGIVPELLQRDASPERMAAEVERLLGDRAAREAQIAALREVRASLGEPGAPLRVAEEVLGVMR</sequence>
<evidence type="ECO:0000255" key="1">
    <source>
        <dbReference type="HAMAP-Rule" id="MF_00392"/>
    </source>
</evidence>
<comment type="function">
    <text evidence="1">Condensation of UDP-2,3-diacylglucosamine and 2,3-diacylglucosamine-1-phosphate to form lipid A disaccharide, a precursor of lipid A, a phosphorylated glycolipid that anchors the lipopolysaccharide to the outer membrane of the cell.</text>
</comment>
<comment type="catalytic activity">
    <reaction evidence="1">
        <text>a lipid X + a UDP-2-N,3-O-bis[(3R)-3-hydroxyacyl]-alpha-D-glucosamine = a lipid A disaccharide + UDP + H(+)</text>
        <dbReference type="Rhea" id="RHEA:67828"/>
        <dbReference type="ChEBI" id="CHEBI:15378"/>
        <dbReference type="ChEBI" id="CHEBI:58223"/>
        <dbReference type="ChEBI" id="CHEBI:137748"/>
        <dbReference type="ChEBI" id="CHEBI:176338"/>
        <dbReference type="ChEBI" id="CHEBI:176343"/>
        <dbReference type="EC" id="2.4.1.182"/>
    </reaction>
</comment>
<comment type="pathway">
    <text evidence="1">Bacterial outer membrane biogenesis; LPS lipid A biosynthesis.</text>
</comment>
<comment type="similarity">
    <text evidence="1">Belongs to the LpxB family.</text>
</comment>
<proteinExistence type="inferred from homology"/>
<dbReference type="EC" id="2.4.1.182" evidence="1"/>
<dbReference type="EMBL" id="CP000251">
    <property type="protein sequence ID" value="ABC82395.1"/>
    <property type="molecule type" value="Genomic_DNA"/>
</dbReference>
<dbReference type="RefSeq" id="WP_011421677.1">
    <property type="nucleotide sequence ID" value="NC_007760.1"/>
</dbReference>
<dbReference type="SMR" id="Q2IL69"/>
<dbReference type="STRING" id="290397.Adeh_2625"/>
<dbReference type="CAZy" id="GT19">
    <property type="family name" value="Glycosyltransferase Family 19"/>
</dbReference>
<dbReference type="KEGG" id="ade:Adeh_2625"/>
<dbReference type="eggNOG" id="COG0763">
    <property type="taxonomic scope" value="Bacteria"/>
</dbReference>
<dbReference type="HOGENOM" id="CLU_036577_3_0_7"/>
<dbReference type="OrthoDB" id="9801642at2"/>
<dbReference type="UniPathway" id="UPA00973"/>
<dbReference type="Proteomes" id="UP000001935">
    <property type="component" value="Chromosome"/>
</dbReference>
<dbReference type="GO" id="GO:0016020">
    <property type="term" value="C:membrane"/>
    <property type="evidence" value="ECO:0007669"/>
    <property type="project" value="GOC"/>
</dbReference>
<dbReference type="GO" id="GO:0008915">
    <property type="term" value="F:lipid-A-disaccharide synthase activity"/>
    <property type="evidence" value="ECO:0007669"/>
    <property type="project" value="UniProtKB-UniRule"/>
</dbReference>
<dbReference type="GO" id="GO:0005543">
    <property type="term" value="F:phospholipid binding"/>
    <property type="evidence" value="ECO:0007669"/>
    <property type="project" value="TreeGrafter"/>
</dbReference>
<dbReference type="GO" id="GO:0009245">
    <property type="term" value="P:lipid A biosynthetic process"/>
    <property type="evidence" value="ECO:0007669"/>
    <property type="project" value="UniProtKB-UniRule"/>
</dbReference>
<dbReference type="Gene3D" id="3.40.50.2000">
    <property type="entry name" value="Glycogen Phosphorylase B"/>
    <property type="match status" value="1"/>
</dbReference>
<dbReference type="HAMAP" id="MF_00392">
    <property type="entry name" value="LpxB"/>
    <property type="match status" value="1"/>
</dbReference>
<dbReference type="InterPro" id="IPR003835">
    <property type="entry name" value="Glyco_trans_19"/>
</dbReference>
<dbReference type="NCBIfam" id="TIGR00215">
    <property type="entry name" value="lpxB"/>
    <property type="match status" value="1"/>
</dbReference>
<dbReference type="PANTHER" id="PTHR30372">
    <property type="entry name" value="LIPID-A-DISACCHARIDE SYNTHASE"/>
    <property type="match status" value="1"/>
</dbReference>
<dbReference type="PANTHER" id="PTHR30372:SF4">
    <property type="entry name" value="LIPID-A-DISACCHARIDE SYNTHASE, MITOCHONDRIAL-RELATED"/>
    <property type="match status" value="1"/>
</dbReference>
<dbReference type="Pfam" id="PF02684">
    <property type="entry name" value="LpxB"/>
    <property type="match status" value="1"/>
</dbReference>
<dbReference type="SUPFAM" id="SSF53756">
    <property type="entry name" value="UDP-Glycosyltransferase/glycogen phosphorylase"/>
    <property type="match status" value="1"/>
</dbReference>
<keyword id="KW-0328">Glycosyltransferase</keyword>
<keyword id="KW-0441">Lipid A biosynthesis</keyword>
<keyword id="KW-0444">Lipid biosynthesis</keyword>
<keyword id="KW-0443">Lipid metabolism</keyword>
<keyword id="KW-1185">Reference proteome</keyword>
<keyword id="KW-0808">Transferase</keyword>